<protein>
    <recommendedName>
        <fullName evidence="1">Heme A synthase</fullName>
        <shortName evidence="1">HAS</shortName>
        <ecNumber evidence="1">1.17.99.9</ecNumber>
    </recommendedName>
    <alternativeName>
        <fullName evidence="1">Cytochrome aa3-controlling protein</fullName>
    </alternativeName>
</protein>
<accession>Q28PL3</accession>
<reference key="1">
    <citation type="submission" date="2006-02" db="EMBL/GenBank/DDBJ databases">
        <title>Complete sequence of chromosome of Jannaschia sp. CCS1.</title>
        <authorList>
            <consortium name="US DOE Joint Genome Institute"/>
            <person name="Copeland A."/>
            <person name="Lucas S."/>
            <person name="Lapidus A."/>
            <person name="Barry K."/>
            <person name="Detter J.C."/>
            <person name="Glavina del Rio T."/>
            <person name="Hammon N."/>
            <person name="Israni S."/>
            <person name="Pitluck S."/>
            <person name="Brettin T."/>
            <person name="Bruce D."/>
            <person name="Han C."/>
            <person name="Tapia R."/>
            <person name="Gilna P."/>
            <person name="Chertkov O."/>
            <person name="Saunders E."/>
            <person name="Schmutz J."/>
            <person name="Larimer F."/>
            <person name="Land M."/>
            <person name="Kyrpides N."/>
            <person name="Lykidis A."/>
            <person name="Moran M.A."/>
            <person name="Belas R."/>
            <person name="Ye W."/>
            <person name="Buchan A."/>
            <person name="Gonzalez J.M."/>
            <person name="Schell M.A."/>
            <person name="Richardson P."/>
        </authorList>
    </citation>
    <scope>NUCLEOTIDE SEQUENCE [LARGE SCALE GENOMIC DNA]</scope>
    <source>
        <strain>CCS1</strain>
    </source>
</reference>
<proteinExistence type="inferred from homology"/>
<keyword id="KW-1003">Cell membrane</keyword>
<keyword id="KW-0350">Heme biosynthesis</keyword>
<keyword id="KW-0408">Iron</keyword>
<keyword id="KW-0472">Membrane</keyword>
<keyword id="KW-0479">Metal-binding</keyword>
<keyword id="KW-0560">Oxidoreductase</keyword>
<keyword id="KW-1185">Reference proteome</keyword>
<keyword id="KW-0812">Transmembrane</keyword>
<keyword id="KW-1133">Transmembrane helix</keyword>
<sequence length="379" mass="42037">MAGSRSIFEEVQDSQKPAAMPGGVSRDRGRGRARVRVFIMILFVMVVVQIAIGGLTRLTDSGLSITEWAPITGAIPPLDEAAWEAELEAYRATTEYQEQNRGMSLAEFKVIYWWEWGHRQWARFLGVVWAVGFVGLLATKSVPVGWTGRLLLLGVLGGLQGVAGWWMVHSGLAPGMFDVASYRLAVHLGLAFLILGLMAWYILRLGRAEAELMTARRDGDRMLAGMATGLLHLTALQILIGALVAGIDAGRNYIDWPLMAGAFTPPDMWAIEPWYRNLFENDGTVQFFHRVTGYLLFVIGVAAWIMARRSARTATKRAFDWMAVMLFGQIVLGIMTVMHSSPWYLAIVHQFGAVVLITLILRARFLARYPLPQSVRGAA</sequence>
<dbReference type="EC" id="1.17.99.9" evidence="1"/>
<dbReference type="EMBL" id="CP000264">
    <property type="protein sequence ID" value="ABD55349.1"/>
    <property type="molecule type" value="Genomic_DNA"/>
</dbReference>
<dbReference type="RefSeq" id="WP_011455553.1">
    <property type="nucleotide sequence ID" value="NC_007802.1"/>
</dbReference>
<dbReference type="SMR" id="Q28PL3"/>
<dbReference type="STRING" id="290400.Jann_2432"/>
<dbReference type="KEGG" id="jan:Jann_2432"/>
<dbReference type="eggNOG" id="COG1612">
    <property type="taxonomic scope" value="Bacteria"/>
</dbReference>
<dbReference type="HOGENOM" id="CLU_017627_0_0_5"/>
<dbReference type="OrthoDB" id="9793156at2"/>
<dbReference type="UniPathway" id="UPA00269">
    <property type="reaction ID" value="UER00713"/>
</dbReference>
<dbReference type="Proteomes" id="UP000008326">
    <property type="component" value="Chromosome"/>
</dbReference>
<dbReference type="GO" id="GO:0005886">
    <property type="term" value="C:plasma membrane"/>
    <property type="evidence" value="ECO:0007669"/>
    <property type="project" value="UniProtKB-SubCell"/>
</dbReference>
<dbReference type="GO" id="GO:0046872">
    <property type="term" value="F:metal ion binding"/>
    <property type="evidence" value="ECO:0007669"/>
    <property type="project" value="UniProtKB-KW"/>
</dbReference>
<dbReference type="GO" id="GO:0016653">
    <property type="term" value="F:oxidoreductase activity, acting on NAD(P)H, heme protein as acceptor"/>
    <property type="evidence" value="ECO:0007669"/>
    <property type="project" value="InterPro"/>
</dbReference>
<dbReference type="GO" id="GO:0006784">
    <property type="term" value="P:heme A biosynthetic process"/>
    <property type="evidence" value="ECO:0007669"/>
    <property type="project" value="UniProtKB-UniRule"/>
</dbReference>
<dbReference type="HAMAP" id="MF_01665">
    <property type="entry name" value="HemeA_synth_type2"/>
    <property type="match status" value="1"/>
</dbReference>
<dbReference type="InterPro" id="IPR003780">
    <property type="entry name" value="COX15/CtaA_fam"/>
</dbReference>
<dbReference type="InterPro" id="IPR054616">
    <property type="entry name" value="HemA_synt_rhodobact"/>
</dbReference>
<dbReference type="InterPro" id="IPR023754">
    <property type="entry name" value="HemeA_Synthase_type2"/>
</dbReference>
<dbReference type="NCBIfam" id="NF045570">
    <property type="entry name" value="HemSynCtaAAlphapr"/>
    <property type="match status" value="1"/>
</dbReference>
<dbReference type="PANTHER" id="PTHR23289">
    <property type="entry name" value="CYTOCHROME C OXIDASE ASSEMBLY PROTEIN COX15"/>
    <property type="match status" value="1"/>
</dbReference>
<dbReference type="PANTHER" id="PTHR23289:SF2">
    <property type="entry name" value="CYTOCHROME C OXIDASE ASSEMBLY PROTEIN COX15 HOMOLOG"/>
    <property type="match status" value="1"/>
</dbReference>
<dbReference type="Pfam" id="PF02628">
    <property type="entry name" value="COX15-CtaA"/>
    <property type="match status" value="1"/>
</dbReference>
<evidence type="ECO:0000255" key="1">
    <source>
        <dbReference type="HAMAP-Rule" id="MF_01665"/>
    </source>
</evidence>
<evidence type="ECO:0000256" key="2">
    <source>
        <dbReference type="SAM" id="MobiDB-lite"/>
    </source>
</evidence>
<feature type="chain" id="PRO_0000349040" description="Heme A synthase">
    <location>
        <begin position="1"/>
        <end position="379"/>
    </location>
</feature>
<feature type="transmembrane region" description="Helical" evidence="1">
    <location>
        <begin position="35"/>
        <end position="55"/>
    </location>
</feature>
<feature type="transmembrane region" description="Helical" evidence="1">
    <location>
        <begin position="124"/>
        <end position="144"/>
    </location>
</feature>
<feature type="transmembrane region" description="Helical" evidence="1">
    <location>
        <begin position="150"/>
        <end position="170"/>
    </location>
</feature>
<feature type="transmembrane region" description="Helical" evidence="1">
    <location>
        <begin position="183"/>
        <end position="203"/>
    </location>
</feature>
<feature type="transmembrane region" description="Helical" evidence="1">
    <location>
        <begin position="227"/>
        <end position="247"/>
    </location>
</feature>
<feature type="transmembrane region" description="Helical" evidence="1">
    <location>
        <begin position="287"/>
        <end position="307"/>
    </location>
</feature>
<feature type="transmembrane region" description="Helical" evidence="1">
    <location>
        <begin position="318"/>
        <end position="338"/>
    </location>
</feature>
<feature type="transmembrane region" description="Helical" evidence="1">
    <location>
        <begin position="341"/>
        <end position="361"/>
    </location>
</feature>
<feature type="region of interest" description="Disordered" evidence="2">
    <location>
        <begin position="1"/>
        <end position="28"/>
    </location>
</feature>
<feature type="binding site" description="axial binding residue" evidence="1">
    <location>
        <position position="289"/>
    </location>
    <ligand>
        <name>heme</name>
        <dbReference type="ChEBI" id="CHEBI:30413"/>
    </ligand>
    <ligandPart>
        <name>Fe</name>
        <dbReference type="ChEBI" id="CHEBI:18248"/>
    </ligandPart>
</feature>
<feature type="binding site" description="axial binding residue" evidence="1">
    <location>
        <position position="349"/>
    </location>
    <ligand>
        <name>heme</name>
        <dbReference type="ChEBI" id="CHEBI:30413"/>
    </ligand>
    <ligandPart>
        <name>Fe</name>
        <dbReference type="ChEBI" id="CHEBI:18248"/>
    </ligandPart>
</feature>
<gene>
    <name evidence="1" type="primary">ctaA</name>
    <name type="ordered locus">Jann_2432</name>
</gene>
<organism>
    <name type="scientific">Jannaschia sp. (strain CCS1)</name>
    <dbReference type="NCBI Taxonomy" id="290400"/>
    <lineage>
        <taxon>Bacteria</taxon>
        <taxon>Pseudomonadati</taxon>
        <taxon>Pseudomonadota</taxon>
        <taxon>Alphaproteobacteria</taxon>
        <taxon>Rhodobacterales</taxon>
        <taxon>Roseobacteraceae</taxon>
        <taxon>Jannaschia</taxon>
    </lineage>
</organism>
<comment type="function">
    <text evidence="1">Catalyzes the conversion of heme O to heme A by two successive hydroxylations of the methyl group at C8. The first hydroxylation forms heme I, the second hydroxylation results in an unstable dihydroxymethyl group, which spontaneously dehydrates, resulting in the formyl group of heme A.</text>
</comment>
<comment type="catalytic activity">
    <reaction evidence="1">
        <text>Fe(II)-heme o + 2 A + H2O = Fe(II)-heme a + 2 AH2</text>
        <dbReference type="Rhea" id="RHEA:63388"/>
        <dbReference type="ChEBI" id="CHEBI:13193"/>
        <dbReference type="ChEBI" id="CHEBI:15377"/>
        <dbReference type="ChEBI" id="CHEBI:17499"/>
        <dbReference type="ChEBI" id="CHEBI:60530"/>
        <dbReference type="ChEBI" id="CHEBI:61715"/>
        <dbReference type="EC" id="1.17.99.9"/>
    </reaction>
    <physiologicalReaction direction="left-to-right" evidence="1">
        <dbReference type="Rhea" id="RHEA:63389"/>
    </physiologicalReaction>
</comment>
<comment type="cofactor">
    <cofactor evidence="1">
        <name>heme b</name>
        <dbReference type="ChEBI" id="CHEBI:60344"/>
    </cofactor>
</comment>
<comment type="pathway">
    <text evidence="1">Porphyrin-containing compound metabolism; heme A biosynthesis; heme A from heme O: step 1/1.</text>
</comment>
<comment type="subunit">
    <text evidence="1">Interacts with CtaB.</text>
</comment>
<comment type="subcellular location">
    <subcellularLocation>
        <location evidence="1">Cell membrane</location>
        <topology evidence="1">Multi-pass membrane protein</topology>
    </subcellularLocation>
</comment>
<comment type="similarity">
    <text evidence="1">Belongs to the COX15/CtaA family. Type 2 subfamily.</text>
</comment>
<name>CTAA_JANSC</name>